<gene>
    <name evidence="1" type="primary">cobS</name>
    <name type="ordered locus">PMT_1861</name>
</gene>
<protein>
    <recommendedName>
        <fullName evidence="1">Adenosylcobinamide-GDP ribazoletransferase</fullName>
        <ecNumber evidence="1">2.7.8.26</ecNumber>
    </recommendedName>
    <alternativeName>
        <fullName evidence="1">Cobalamin synthase</fullName>
    </alternativeName>
    <alternativeName>
        <fullName evidence="1">Cobalamin-5'-phosphate synthase</fullName>
    </alternativeName>
</protein>
<proteinExistence type="inferred from homology"/>
<comment type="function">
    <text evidence="1">Joins adenosylcobinamide-GDP and alpha-ribazole to generate adenosylcobalamin (Ado-cobalamin). Also synthesizes adenosylcobalamin 5'-phosphate from adenosylcobinamide-GDP and alpha-ribazole 5'-phosphate.</text>
</comment>
<comment type="catalytic activity">
    <reaction evidence="1">
        <text>alpha-ribazole + adenosylcob(III)inamide-GDP = adenosylcob(III)alamin + GMP + H(+)</text>
        <dbReference type="Rhea" id="RHEA:16049"/>
        <dbReference type="ChEBI" id="CHEBI:10329"/>
        <dbReference type="ChEBI" id="CHEBI:15378"/>
        <dbReference type="ChEBI" id="CHEBI:18408"/>
        <dbReference type="ChEBI" id="CHEBI:58115"/>
        <dbReference type="ChEBI" id="CHEBI:60487"/>
        <dbReference type="EC" id="2.7.8.26"/>
    </reaction>
</comment>
<comment type="catalytic activity">
    <reaction evidence="1">
        <text>alpha-ribazole 5'-phosphate + adenosylcob(III)inamide-GDP = adenosylcob(III)alamin 5'-phosphate + GMP + H(+)</text>
        <dbReference type="Rhea" id="RHEA:23560"/>
        <dbReference type="ChEBI" id="CHEBI:15378"/>
        <dbReference type="ChEBI" id="CHEBI:57918"/>
        <dbReference type="ChEBI" id="CHEBI:58115"/>
        <dbReference type="ChEBI" id="CHEBI:60487"/>
        <dbReference type="ChEBI" id="CHEBI:60493"/>
        <dbReference type="EC" id="2.7.8.26"/>
    </reaction>
</comment>
<comment type="cofactor">
    <cofactor evidence="1">
        <name>Mg(2+)</name>
        <dbReference type="ChEBI" id="CHEBI:18420"/>
    </cofactor>
</comment>
<comment type="pathway">
    <text evidence="1">Cofactor biosynthesis; adenosylcobalamin biosynthesis; adenosylcobalamin from cob(II)yrinate a,c-diamide: step 7/7.</text>
</comment>
<comment type="subcellular location">
    <subcellularLocation>
        <location evidence="1">Cell inner membrane</location>
        <topology evidence="1">Multi-pass membrane protein</topology>
    </subcellularLocation>
</comment>
<comment type="similarity">
    <text evidence="1">Belongs to the CobS family.</text>
</comment>
<evidence type="ECO:0000255" key="1">
    <source>
        <dbReference type="HAMAP-Rule" id="MF_00719"/>
    </source>
</evidence>
<sequence length="260" mass="27886">MRAPLWLRDLAGAWIFYSVLPAWPGLKPRFERIARFAPWIGLVLGGLQSFLWLVLIRADWPTSAVTLLVIGLGAWLSGGLHLDGLMDTADGLAAGRERCLQAMDDSCVGASGVQALLVVVLLQIASLLRLGSLAPLALLIAAFWGRCAPLWAMARFFYLREGQAGTASFHRRYRKGWQEALPACLVLLLALTVVPSLMIVGWPSQMVLMAGIGVGVLPAFLVPELLGRRLGGHSGDSYGASVVLVETITLLLLAVLLPAG</sequence>
<accession>Q7V4T2</accession>
<reference key="1">
    <citation type="journal article" date="2003" name="Nature">
        <title>Genome divergence in two Prochlorococcus ecotypes reflects oceanic niche differentiation.</title>
        <authorList>
            <person name="Rocap G."/>
            <person name="Larimer F.W."/>
            <person name="Lamerdin J.E."/>
            <person name="Malfatti S."/>
            <person name="Chain P."/>
            <person name="Ahlgren N.A."/>
            <person name="Arellano A."/>
            <person name="Coleman M."/>
            <person name="Hauser L."/>
            <person name="Hess W.R."/>
            <person name="Johnson Z.I."/>
            <person name="Land M.L."/>
            <person name="Lindell D."/>
            <person name="Post A.F."/>
            <person name="Regala W."/>
            <person name="Shah M."/>
            <person name="Shaw S.L."/>
            <person name="Steglich C."/>
            <person name="Sullivan M.B."/>
            <person name="Ting C.S."/>
            <person name="Tolonen A."/>
            <person name="Webb E.A."/>
            <person name="Zinser E.R."/>
            <person name="Chisholm S.W."/>
        </authorList>
    </citation>
    <scope>NUCLEOTIDE SEQUENCE [LARGE SCALE GENOMIC DNA]</scope>
    <source>
        <strain>MIT 9313</strain>
    </source>
</reference>
<feature type="chain" id="PRO_1000083261" description="Adenosylcobinamide-GDP ribazoletransferase">
    <location>
        <begin position="1"/>
        <end position="260"/>
    </location>
</feature>
<feature type="transmembrane region" description="Helical" evidence="1">
    <location>
        <begin position="3"/>
        <end position="23"/>
    </location>
</feature>
<feature type="transmembrane region" description="Helical" evidence="1">
    <location>
        <begin position="36"/>
        <end position="56"/>
    </location>
</feature>
<feature type="transmembrane region" description="Helical" evidence="1">
    <location>
        <begin position="60"/>
        <end position="80"/>
    </location>
</feature>
<feature type="transmembrane region" description="Helical" evidence="1">
    <location>
        <begin position="108"/>
        <end position="128"/>
    </location>
</feature>
<feature type="transmembrane region" description="Helical" evidence="1">
    <location>
        <begin position="133"/>
        <end position="153"/>
    </location>
</feature>
<feature type="transmembrane region" description="Helical" evidence="1">
    <location>
        <begin position="180"/>
        <end position="200"/>
    </location>
</feature>
<feature type="transmembrane region" description="Helical" evidence="1">
    <location>
        <begin position="206"/>
        <end position="226"/>
    </location>
</feature>
<feature type="transmembrane region" description="Helical" evidence="1">
    <location>
        <begin position="239"/>
        <end position="259"/>
    </location>
</feature>
<keyword id="KW-0997">Cell inner membrane</keyword>
<keyword id="KW-1003">Cell membrane</keyword>
<keyword id="KW-0169">Cobalamin biosynthesis</keyword>
<keyword id="KW-0460">Magnesium</keyword>
<keyword id="KW-0472">Membrane</keyword>
<keyword id="KW-1185">Reference proteome</keyword>
<keyword id="KW-0808">Transferase</keyword>
<keyword id="KW-0812">Transmembrane</keyword>
<keyword id="KW-1133">Transmembrane helix</keyword>
<organism>
    <name type="scientific">Prochlorococcus marinus (strain MIT 9313)</name>
    <dbReference type="NCBI Taxonomy" id="74547"/>
    <lineage>
        <taxon>Bacteria</taxon>
        <taxon>Bacillati</taxon>
        <taxon>Cyanobacteriota</taxon>
        <taxon>Cyanophyceae</taxon>
        <taxon>Synechococcales</taxon>
        <taxon>Prochlorococcaceae</taxon>
        <taxon>Prochlorococcus</taxon>
    </lineage>
</organism>
<name>COBS_PROMM</name>
<dbReference type="EC" id="2.7.8.26" evidence="1"/>
<dbReference type="EMBL" id="BX548175">
    <property type="protein sequence ID" value="CAE22036.1"/>
    <property type="molecule type" value="Genomic_DNA"/>
</dbReference>
<dbReference type="RefSeq" id="WP_011131228.1">
    <property type="nucleotide sequence ID" value="NC_005071.1"/>
</dbReference>
<dbReference type="KEGG" id="pmt:PMT_1861"/>
<dbReference type="eggNOG" id="COG0368">
    <property type="taxonomic scope" value="Bacteria"/>
</dbReference>
<dbReference type="HOGENOM" id="CLU_057426_3_0_3"/>
<dbReference type="UniPathway" id="UPA00148">
    <property type="reaction ID" value="UER00238"/>
</dbReference>
<dbReference type="Proteomes" id="UP000001423">
    <property type="component" value="Chromosome"/>
</dbReference>
<dbReference type="GO" id="GO:0005886">
    <property type="term" value="C:plasma membrane"/>
    <property type="evidence" value="ECO:0007669"/>
    <property type="project" value="UniProtKB-SubCell"/>
</dbReference>
<dbReference type="GO" id="GO:0051073">
    <property type="term" value="F:adenosylcobinamide-GDP ribazoletransferase activity"/>
    <property type="evidence" value="ECO:0007669"/>
    <property type="project" value="UniProtKB-UniRule"/>
</dbReference>
<dbReference type="GO" id="GO:0008818">
    <property type="term" value="F:cobalamin 5'-phosphate synthase activity"/>
    <property type="evidence" value="ECO:0007669"/>
    <property type="project" value="UniProtKB-UniRule"/>
</dbReference>
<dbReference type="GO" id="GO:0009236">
    <property type="term" value="P:cobalamin biosynthetic process"/>
    <property type="evidence" value="ECO:0007669"/>
    <property type="project" value="UniProtKB-UniRule"/>
</dbReference>
<dbReference type="HAMAP" id="MF_00719">
    <property type="entry name" value="CobS"/>
    <property type="match status" value="1"/>
</dbReference>
<dbReference type="InterPro" id="IPR003805">
    <property type="entry name" value="CobS"/>
</dbReference>
<dbReference type="NCBIfam" id="TIGR00317">
    <property type="entry name" value="cobS"/>
    <property type="match status" value="1"/>
</dbReference>
<dbReference type="PANTHER" id="PTHR34148">
    <property type="entry name" value="ADENOSYLCOBINAMIDE-GDP RIBAZOLETRANSFERASE"/>
    <property type="match status" value="1"/>
</dbReference>
<dbReference type="PANTHER" id="PTHR34148:SF1">
    <property type="entry name" value="ADENOSYLCOBINAMIDE-GDP RIBAZOLETRANSFERASE"/>
    <property type="match status" value="1"/>
</dbReference>
<dbReference type="Pfam" id="PF02654">
    <property type="entry name" value="CobS"/>
    <property type="match status" value="1"/>
</dbReference>